<accession>A9KMD6</accession>
<protein>
    <recommendedName>
        <fullName evidence="1">Elongation factor P</fullName>
        <shortName evidence="1">EF-P</shortName>
    </recommendedName>
</protein>
<proteinExistence type="inferred from homology"/>
<feature type="chain" id="PRO_1000076510" description="Elongation factor P">
    <location>
        <begin position="1"/>
        <end position="185"/>
    </location>
</feature>
<reference key="1">
    <citation type="submission" date="2007-11" db="EMBL/GenBank/DDBJ databases">
        <title>Complete genome sequence of Clostridium phytofermentans ISDg.</title>
        <authorList>
            <person name="Leschine S.B."/>
            <person name="Warnick T.A."/>
            <person name="Blanchard J.L."/>
            <person name="Schnell D.J."/>
            <person name="Petit E.L."/>
            <person name="LaTouf W.G."/>
            <person name="Copeland A."/>
            <person name="Lucas S."/>
            <person name="Lapidus A."/>
            <person name="Barry K."/>
            <person name="Glavina del Rio T."/>
            <person name="Dalin E."/>
            <person name="Tice H."/>
            <person name="Pitluck S."/>
            <person name="Kiss H."/>
            <person name="Brettin T."/>
            <person name="Bruce D."/>
            <person name="Detter J.C."/>
            <person name="Han C."/>
            <person name="Kuske C."/>
            <person name="Schmutz J."/>
            <person name="Larimer F."/>
            <person name="Land M."/>
            <person name="Hauser L."/>
            <person name="Kyrpides N."/>
            <person name="Kim E.A."/>
            <person name="Richardson P."/>
        </authorList>
    </citation>
    <scope>NUCLEOTIDE SEQUENCE [LARGE SCALE GENOMIC DNA]</scope>
    <source>
        <strain>ATCC 700394 / DSM 18823 / ISDg</strain>
    </source>
</reference>
<name>EFP_LACP7</name>
<gene>
    <name evidence="1" type="primary">efp</name>
    <name type="ordered locus">Cphy_2529</name>
</gene>
<organism>
    <name type="scientific">Lachnoclostridium phytofermentans (strain ATCC 700394 / DSM 18823 / ISDg)</name>
    <name type="common">Clostridium phytofermentans</name>
    <dbReference type="NCBI Taxonomy" id="357809"/>
    <lineage>
        <taxon>Bacteria</taxon>
        <taxon>Bacillati</taxon>
        <taxon>Bacillota</taxon>
        <taxon>Clostridia</taxon>
        <taxon>Lachnospirales</taxon>
        <taxon>Lachnospiraceae</taxon>
    </lineage>
</organism>
<keyword id="KW-0963">Cytoplasm</keyword>
<keyword id="KW-0251">Elongation factor</keyword>
<keyword id="KW-0648">Protein biosynthesis</keyword>
<keyword id="KW-1185">Reference proteome</keyword>
<dbReference type="EMBL" id="CP000885">
    <property type="protein sequence ID" value="ABX42890.1"/>
    <property type="molecule type" value="Genomic_DNA"/>
</dbReference>
<dbReference type="RefSeq" id="WP_012200543.1">
    <property type="nucleotide sequence ID" value="NC_010001.1"/>
</dbReference>
<dbReference type="SMR" id="A9KMD6"/>
<dbReference type="STRING" id="357809.Cphy_2529"/>
<dbReference type="KEGG" id="cpy:Cphy_2529"/>
<dbReference type="eggNOG" id="COG0231">
    <property type="taxonomic scope" value="Bacteria"/>
</dbReference>
<dbReference type="HOGENOM" id="CLU_074944_0_1_9"/>
<dbReference type="OrthoDB" id="9801844at2"/>
<dbReference type="UniPathway" id="UPA00345"/>
<dbReference type="Proteomes" id="UP000000370">
    <property type="component" value="Chromosome"/>
</dbReference>
<dbReference type="GO" id="GO:0005737">
    <property type="term" value="C:cytoplasm"/>
    <property type="evidence" value="ECO:0007669"/>
    <property type="project" value="UniProtKB-SubCell"/>
</dbReference>
<dbReference type="GO" id="GO:0003746">
    <property type="term" value="F:translation elongation factor activity"/>
    <property type="evidence" value="ECO:0007669"/>
    <property type="project" value="UniProtKB-UniRule"/>
</dbReference>
<dbReference type="GO" id="GO:0043043">
    <property type="term" value="P:peptide biosynthetic process"/>
    <property type="evidence" value="ECO:0007669"/>
    <property type="project" value="InterPro"/>
</dbReference>
<dbReference type="CDD" id="cd04470">
    <property type="entry name" value="S1_EF-P_repeat_1"/>
    <property type="match status" value="1"/>
</dbReference>
<dbReference type="CDD" id="cd05794">
    <property type="entry name" value="S1_EF-P_repeat_2"/>
    <property type="match status" value="1"/>
</dbReference>
<dbReference type="FunFam" id="2.30.30.30:FF:000003">
    <property type="entry name" value="Elongation factor P"/>
    <property type="match status" value="1"/>
</dbReference>
<dbReference type="FunFam" id="2.40.50.140:FF:000004">
    <property type="entry name" value="Elongation factor P"/>
    <property type="match status" value="1"/>
</dbReference>
<dbReference type="FunFam" id="2.40.50.140:FF:000009">
    <property type="entry name" value="Elongation factor P"/>
    <property type="match status" value="1"/>
</dbReference>
<dbReference type="Gene3D" id="2.30.30.30">
    <property type="match status" value="1"/>
</dbReference>
<dbReference type="Gene3D" id="2.40.50.140">
    <property type="entry name" value="Nucleic acid-binding proteins"/>
    <property type="match status" value="2"/>
</dbReference>
<dbReference type="HAMAP" id="MF_00141">
    <property type="entry name" value="EF_P"/>
    <property type="match status" value="1"/>
</dbReference>
<dbReference type="InterPro" id="IPR015365">
    <property type="entry name" value="Elong-fact-P_C"/>
</dbReference>
<dbReference type="InterPro" id="IPR012340">
    <property type="entry name" value="NA-bd_OB-fold"/>
</dbReference>
<dbReference type="InterPro" id="IPR014722">
    <property type="entry name" value="Rib_uL2_dom2"/>
</dbReference>
<dbReference type="InterPro" id="IPR020599">
    <property type="entry name" value="Transl_elong_fac_P/YeiP"/>
</dbReference>
<dbReference type="InterPro" id="IPR013185">
    <property type="entry name" value="Transl_elong_KOW-like"/>
</dbReference>
<dbReference type="InterPro" id="IPR001059">
    <property type="entry name" value="Transl_elong_P/YeiP_cen"/>
</dbReference>
<dbReference type="InterPro" id="IPR013852">
    <property type="entry name" value="Transl_elong_P/YeiP_CS"/>
</dbReference>
<dbReference type="InterPro" id="IPR011768">
    <property type="entry name" value="Transl_elongation_fac_P"/>
</dbReference>
<dbReference type="InterPro" id="IPR008991">
    <property type="entry name" value="Translation_prot_SH3-like_sf"/>
</dbReference>
<dbReference type="NCBIfam" id="TIGR00038">
    <property type="entry name" value="efp"/>
    <property type="match status" value="1"/>
</dbReference>
<dbReference type="NCBIfam" id="NF001810">
    <property type="entry name" value="PRK00529.1"/>
    <property type="match status" value="1"/>
</dbReference>
<dbReference type="PANTHER" id="PTHR30053">
    <property type="entry name" value="ELONGATION FACTOR P"/>
    <property type="match status" value="1"/>
</dbReference>
<dbReference type="PANTHER" id="PTHR30053:SF12">
    <property type="entry name" value="ELONGATION FACTOR P (EF-P) FAMILY PROTEIN"/>
    <property type="match status" value="1"/>
</dbReference>
<dbReference type="Pfam" id="PF01132">
    <property type="entry name" value="EFP"/>
    <property type="match status" value="1"/>
</dbReference>
<dbReference type="Pfam" id="PF08207">
    <property type="entry name" value="EFP_N"/>
    <property type="match status" value="1"/>
</dbReference>
<dbReference type="Pfam" id="PF09285">
    <property type="entry name" value="Elong-fact-P_C"/>
    <property type="match status" value="1"/>
</dbReference>
<dbReference type="PIRSF" id="PIRSF005901">
    <property type="entry name" value="EF-P"/>
    <property type="match status" value="1"/>
</dbReference>
<dbReference type="SMART" id="SM01185">
    <property type="entry name" value="EFP"/>
    <property type="match status" value="1"/>
</dbReference>
<dbReference type="SMART" id="SM00841">
    <property type="entry name" value="Elong-fact-P_C"/>
    <property type="match status" value="1"/>
</dbReference>
<dbReference type="SUPFAM" id="SSF50249">
    <property type="entry name" value="Nucleic acid-binding proteins"/>
    <property type="match status" value="2"/>
</dbReference>
<dbReference type="SUPFAM" id="SSF50104">
    <property type="entry name" value="Translation proteins SH3-like domain"/>
    <property type="match status" value="1"/>
</dbReference>
<dbReference type="PROSITE" id="PS01275">
    <property type="entry name" value="EFP"/>
    <property type="match status" value="1"/>
</dbReference>
<evidence type="ECO:0000255" key="1">
    <source>
        <dbReference type="HAMAP-Rule" id="MF_00141"/>
    </source>
</evidence>
<comment type="function">
    <text evidence="1">Involved in peptide bond synthesis. Stimulates efficient translation and peptide-bond synthesis on native or reconstituted 70S ribosomes in vitro. Probably functions indirectly by altering the affinity of the ribosome for aminoacyl-tRNA, thus increasing their reactivity as acceptors for peptidyl transferase.</text>
</comment>
<comment type="pathway">
    <text evidence="1">Protein biosynthesis; polypeptide chain elongation.</text>
</comment>
<comment type="subcellular location">
    <subcellularLocation>
        <location evidence="1">Cytoplasm</location>
    </subcellularLocation>
</comment>
<comment type="similarity">
    <text evidence="1">Belongs to the elongation factor P family.</text>
</comment>
<sequence length="185" mass="20760">MISAGDFRNGLTLEIDNAVYQVIEFQHVKPGKGAAFVRTKLRDIKNGGLTERTFRPQEKYPQAHIERSDMQYLYSDGELYNFMNVETFDQIALNDEAVGDSLKFVKENDMVKMLSHQGNVFAIEPPLFVELVIVDTEPGFKGDTAQGATKPAKVETGATVYVPLFVNQGDKISIDTRTGDYMKRV</sequence>